<protein>
    <recommendedName>
        <fullName>Autoinducer 2 import system permease protein LsrC</fullName>
        <shortName>AI-2 import system permease protein LsrC</shortName>
    </recommendedName>
</protein>
<organism>
    <name type="scientific">Escherichia coli (strain SMS-3-5 / SECEC)</name>
    <dbReference type="NCBI Taxonomy" id="439855"/>
    <lineage>
        <taxon>Bacteria</taxon>
        <taxon>Pseudomonadati</taxon>
        <taxon>Pseudomonadota</taxon>
        <taxon>Gammaproteobacteria</taxon>
        <taxon>Enterobacterales</taxon>
        <taxon>Enterobacteriaceae</taxon>
        <taxon>Escherichia</taxon>
    </lineage>
</organism>
<comment type="function">
    <text evidence="1">Part of the ABC transporter complex LsrABCD involved in autoinducer 2 (AI-2) import. Probably responsible for the translocation of the substrate across the membrane (By similarity).</text>
</comment>
<comment type="subunit">
    <text evidence="1">The complex is composed of two ATP-binding proteins (LsrA), two transmembrane proteins (LsrC and LsrD) and a solute-binding protein (LsrB).</text>
</comment>
<comment type="subcellular location">
    <subcellularLocation>
        <location evidence="1">Cell inner membrane</location>
        <topology evidence="1">Multi-pass membrane protein</topology>
    </subcellularLocation>
</comment>
<comment type="similarity">
    <text evidence="3">Belongs to the binding-protein-dependent transport system permease family. AraH/RbsC subfamily.</text>
</comment>
<name>LSRC_ECOSM</name>
<evidence type="ECO:0000250" key="1"/>
<evidence type="ECO:0000255" key="2"/>
<evidence type="ECO:0000305" key="3"/>
<keyword id="KW-0997">Cell inner membrane</keyword>
<keyword id="KW-1003">Cell membrane</keyword>
<keyword id="KW-0472">Membrane</keyword>
<keyword id="KW-0812">Transmembrane</keyword>
<keyword id="KW-1133">Transmembrane helix</keyword>
<keyword id="KW-0813">Transport</keyword>
<reference key="1">
    <citation type="journal article" date="2008" name="J. Bacteriol.">
        <title>Insights into the environmental resistance gene pool from the genome sequence of the multidrug-resistant environmental isolate Escherichia coli SMS-3-5.</title>
        <authorList>
            <person name="Fricke W.F."/>
            <person name="Wright M.S."/>
            <person name="Lindell A.H."/>
            <person name="Harkins D.M."/>
            <person name="Baker-Austin C."/>
            <person name="Ravel J."/>
            <person name="Stepanauskas R."/>
        </authorList>
    </citation>
    <scope>NUCLEOTIDE SEQUENCE [LARGE SCALE GENOMIC DNA]</scope>
    <source>
        <strain>SMS-3-5 / SECEC</strain>
    </source>
</reference>
<sequence>MLKFIQNNREITALLAVVLLFVLPGFLDRQYLSVQTLTMVYSSAQILILLAMGATLVMLTRNIDVSVGSITGMCAVLLGMLLNAGYSLPVACVATLLLGLLAGFFNGVLVAWLKIPAIVATLGTLGLYRGIMLLWTGGKWIEGLPAELKQLSAPLLFGVSAIGWLTIILVAFMAWLLAKTAFGRSFYVTGDNLQGARQLGVRTEAIRIVAFSLNGCMAALAGIVFASQIGFIPNQTGTGLEMKAIAACVLGGISLLGGSGAIIGAVLGAWFLTQIDSVLVLLRIPAWWNDFIAGMVLLAVLVFDGRLRCALERNLRRQKYARFMMPPPPVKPASSGKKREAA</sequence>
<proteinExistence type="inferred from homology"/>
<accession>B1LFA1</accession>
<feature type="chain" id="PRO_0000351339" description="Autoinducer 2 import system permease protein LsrC">
    <location>
        <begin position="1"/>
        <end position="342"/>
    </location>
</feature>
<feature type="topological domain" description="Periplasmic" evidence="2">
    <location>
        <begin position="1"/>
        <end position="13"/>
    </location>
</feature>
<feature type="transmembrane region" description="Helical" evidence="2">
    <location>
        <begin position="14"/>
        <end position="34"/>
    </location>
</feature>
<feature type="topological domain" description="Cytoplasmic" evidence="2">
    <location>
        <begin position="35"/>
        <end position="38"/>
    </location>
</feature>
<feature type="transmembrane region" description="Helical" evidence="2">
    <location>
        <begin position="39"/>
        <end position="59"/>
    </location>
</feature>
<feature type="topological domain" description="Periplasmic" evidence="2">
    <location>
        <begin position="60"/>
        <end position="69"/>
    </location>
</feature>
<feature type="transmembrane region" description="Helical" evidence="2">
    <location>
        <begin position="70"/>
        <end position="90"/>
    </location>
</feature>
<feature type="topological domain" description="Cytoplasmic" evidence="2">
    <location>
        <begin position="91"/>
        <end position="92"/>
    </location>
</feature>
<feature type="transmembrane region" description="Helical" evidence="2">
    <location>
        <begin position="93"/>
        <end position="113"/>
    </location>
</feature>
<feature type="topological domain" description="Periplasmic" evidence="2">
    <location>
        <position position="114"/>
    </location>
</feature>
<feature type="transmembrane region" description="Helical" evidence="2">
    <location>
        <begin position="115"/>
        <end position="135"/>
    </location>
</feature>
<feature type="topological domain" description="Cytoplasmic" evidence="2">
    <location>
        <begin position="136"/>
        <end position="154"/>
    </location>
</feature>
<feature type="transmembrane region" description="Helical" evidence="2">
    <location>
        <begin position="155"/>
        <end position="175"/>
    </location>
</feature>
<feature type="topological domain" description="Periplasmic" evidence="2">
    <location>
        <begin position="176"/>
        <end position="212"/>
    </location>
</feature>
<feature type="transmembrane region" description="Helical" evidence="2">
    <location>
        <begin position="213"/>
        <end position="233"/>
    </location>
</feature>
<feature type="topological domain" description="Cytoplasmic" evidence="2">
    <location>
        <begin position="234"/>
        <end position="251"/>
    </location>
</feature>
<feature type="transmembrane region" description="Helical" evidence="2">
    <location>
        <begin position="252"/>
        <end position="272"/>
    </location>
</feature>
<feature type="topological domain" description="Periplasmic" evidence="2">
    <location>
        <begin position="273"/>
        <end position="283"/>
    </location>
</feature>
<feature type="transmembrane region" description="Helical" evidence="2">
    <location>
        <begin position="284"/>
        <end position="304"/>
    </location>
</feature>
<feature type="topological domain" description="Cytoplasmic" evidence="2">
    <location>
        <begin position="305"/>
        <end position="342"/>
    </location>
</feature>
<dbReference type="EMBL" id="CP000970">
    <property type="protein sequence ID" value="ACB17423.1"/>
    <property type="molecule type" value="Genomic_DNA"/>
</dbReference>
<dbReference type="RefSeq" id="WP_000911178.1">
    <property type="nucleotide sequence ID" value="NC_010498.1"/>
</dbReference>
<dbReference type="KEGG" id="ecm:EcSMS35_1658"/>
<dbReference type="HOGENOM" id="CLU_028880_0_1_6"/>
<dbReference type="Proteomes" id="UP000007011">
    <property type="component" value="Chromosome"/>
</dbReference>
<dbReference type="GO" id="GO:0005886">
    <property type="term" value="C:plasma membrane"/>
    <property type="evidence" value="ECO:0007669"/>
    <property type="project" value="UniProtKB-SubCell"/>
</dbReference>
<dbReference type="GO" id="GO:0022857">
    <property type="term" value="F:transmembrane transporter activity"/>
    <property type="evidence" value="ECO:0007669"/>
    <property type="project" value="InterPro"/>
</dbReference>
<dbReference type="CDD" id="cd06579">
    <property type="entry name" value="TM_PBP1_transp_AraH_like"/>
    <property type="match status" value="1"/>
</dbReference>
<dbReference type="InterPro" id="IPR001851">
    <property type="entry name" value="ABC_transp_permease"/>
</dbReference>
<dbReference type="NCBIfam" id="NF011961">
    <property type="entry name" value="PRK15432.1"/>
    <property type="match status" value="1"/>
</dbReference>
<dbReference type="PANTHER" id="PTHR32196">
    <property type="entry name" value="ABC TRANSPORTER PERMEASE PROTEIN YPHD-RELATED-RELATED"/>
    <property type="match status" value="1"/>
</dbReference>
<dbReference type="PANTHER" id="PTHR32196:SF29">
    <property type="entry name" value="AUTOINDUCER 2 IMPORT SYSTEM PERMEASE PROTEIN LSRC"/>
    <property type="match status" value="1"/>
</dbReference>
<dbReference type="Pfam" id="PF02653">
    <property type="entry name" value="BPD_transp_2"/>
    <property type="match status" value="1"/>
</dbReference>
<gene>
    <name type="primary">lsrC</name>
    <name type="ordered locus">EcSMS35_1658</name>
</gene>